<keyword id="KW-0028">Amino-acid biosynthesis</keyword>
<keyword id="KW-0479">Metal-binding</keyword>
<keyword id="KW-0486">Methionine biosynthesis</keyword>
<keyword id="KW-0489">Methyltransferase</keyword>
<keyword id="KW-1185">Reference proteome</keyword>
<keyword id="KW-0677">Repeat</keyword>
<keyword id="KW-0808">Transferase</keyword>
<keyword id="KW-0862">Zinc</keyword>
<protein>
    <recommendedName>
        <fullName evidence="1">5-methyltetrahydropteroyltriglutamate--homocysteine methyltransferase</fullName>
        <ecNumber evidence="1">2.1.1.14</ecNumber>
    </recommendedName>
    <alternativeName>
        <fullName evidence="1">Cobalamin-independent methionine synthase</fullName>
    </alternativeName>
    <alternativeName>
        <fullName evidence="1">Methionine synthase, vitamin-B12 independent isozyme</fullName>
    </alternativeName>
</protein>
<name>METE_CAUVC</name>
<feature type="chain" id="PRO_0000098624" description="5-methyltetrahydropteroyltriglutamate--homocysteine methyltransferase">
    <location>
        <begin position="1"/>
        <end position="777"/>
    </location>
</feature>
<feature type="active site" description="Proton donor" evidence="1">
    <location>
        <position position="718"/>
    </location>
</feature>
<feature type="binding site" evidence="1">
    <location>
        <begin position="17"/>
        <end position="20"/>
    </location>
    <ligand>
        <name>5-methyltetrahydropteroyltri-L-glutamate</name>
        <dbReference type="ChEBI" id="CHEBI:58207"/>
    </ligand>
</feature>
<feature type="binding site" evidence="1">
    <location>
        <position position="132"/>
    </location>
    <ligand>
        <name>5-methyltetrahydropteroyltri-L-glutamate</name>
        <dbReference type="ChEBI" id="CHEBI:58207"/>
    </ligand>
</feature>
<feature type="binding site" evidence="1">
    <location>
        <begin position="455"/>
        <end position="457"/>
    </location>
    <ligand>
        <name>L-homocysteine</name>
        <dbReference type="ChEBI" id="CHEBI:58199"/>
    </ligand>
</feature>
<feature type="binding site" evidence="1">
    <location>
        <begin position="455"/>
        <end position="457"/>
    </location>
    <ligand>
        <name>L-methionine</name>
        <dbReference type="ChEBI" id="CHEBI:57844"/>
    </ligand>
</feature>
<feature type="binding site" evidence="1">
    <location>
        <position position="508"/>
    </location>
    <ligand>
        <name>L-homocysteine</name>
        <dbReference type="ChEBI" id="CHEBI:58199"/>
    </ligand>
</feature>
<feature type="binding site" evidence="1">
    <location>
        <position position="508"/>
    </location>
    <ligand>
        <name>L-methionine</name>
        <dbReference type="ChEBI" id="CHEBI:57844"/>
    </ligand>
</feature>
<feature type="binding site" evidence="1">
    <location>
        <begin position="539"/>
        <end position="540"/>
    </location>
    <ligand>
        <name>5-methyltetrahydropteroyltri-L-glutamate</name>
        <dbReference type="ChEBI" id="CHEBI:58207"/>
    </ligand>
</feature>
<feature type="binding site" evidence="1">
    <location>
        <position position="585"/>
    </location>
    <ligand>
        <name>5-methyltetrahydropteroyltri-L-glutamate</name>
        <dbReference type="ChEBI" id="CHEBI:58207"/>
    </ligand>
</feature>
<feature type="binding site" evidence="1">
    <location>
        <position position="623"/>
    </location>
    <ligand>
        <name>L-homocysteine</name>
        <dbReference type="ChEBI" id="CHEBI:58199"/>
    </ligand>
</feature>
<feature type="binding site" evidence="1">
    <location>
        <position position="623"/>
    </location>
    <ligand>
        <name>L-methionine</name>
        <dbReference type="ChEBI" id="CHEBI:57844"/>
    </ligand>
</feature>
<feature type="binding site" evidence="1">
    <location>
        <position position="629"/>
    </location>
    <ligand>
        <name>5-methyltetrahydropteroyltri-L-glutamate</name>
        <dbReference type="ChEBI" id="CHEBI:58207"/>
    </ligand>
</feature>
<feature type="binding site" evidence="1">
    <location>
        <position position="665"/>
    </location>
    <ligand>
        <name>Zn(2+)</name>
        <dbReference type="ChEBI" id="CHEBI:29105"/>
        <note>catalytic</note>
    </ligand>
</feature>
<feature type="binding site" evidence="1">
    <location>
        <position position="667"/>
    </location>
    <ligand>
        <name>Zn(2+)</name>
        <dbReference type="ChEBI" id="CHEBI:29105"/>
        <note>catalytic</note>
    </ligand>
</feature>
<feature type="binding site" evidence="1">
    <location>
        <position position="689"/>
    </location>
    <ligand>
        <name>Zn(2+)</name>
        <dbReference type="ChEBI" id="CHEBI:29105"/>
        <note>catalytic</note>
    </ligand>
</feature>
<feature type="binding site" evidence="1">
    <location>
        <position position="750"/>
    </location>
    <ligand>
        <name>Zn(2+)</name>
        <dbReference type="ChEBI" id="CHEBI:29105"/>
        <note>catalytic</note>
    </ligand>
</feature>
<proteinExistence type="inferred from homology"/>
<comment type="function">
    <text evidence="1">Catalyzes the transfer of a methyl group from 5-methyltetrahydrofolate to homocysteine resulting in methionine formation.</text>
</comment>
<comment type="catalytic activity">
    <reaction evidence="1">
        <text>5-methyltetrahydropteroyltri-L-glutamate + L-homocysteine = tetrahydropteroyltri-L-glutamate + L-methionine</text>
        <dbReference type="Rhea" id="RHEA:21196"/>
        <dbReference type="ChEBI" id="CHEBI:57844"/>
        <dbReference type="ChEBI" id="CHEBI:58140"/>
        <dbReference type="ChEBI" id="CHEBI:58199"/>
        <dbReference type="ChEBI" id="CHEBI:58207"/>
        <dbReference type="EC" id="2.1.1.14"/>
    </reaction>
</comment>
<comment type="cofactor">
    <cofactor evidence="1">
        <name>Zn(2+)</name>
        <dbReference type="ChEBI" id="CHEBI:29105"/>
    </cofactor>
    <text evidence="1">Binds 1 zinc ion per subunit.</text>
</comment>
<comment type="pathway">
    <text evidence="1">Amino-acid biosynthesis; L-methionine biosynthesis via de novo pathway; L-methionine from L-homocysteine (MetE route): step 1/1.</text>
</comment>
<comment type="similarity">
    <text evidence="1">Belongs to the vitamin-B12 independent methionine synthase family.</text>
</comment>
<reference key="1">
    <citation type="journal article" date="2001" name="Proc. Natl. Acad. Sci. U.S.A.">
        <title>Complete genome sequence of Caulobacter crescentus.</title>
        <authorList>
            <person name="Nierman W.C."/>
            <person name="Feldblyum T.V."/>
            <person name="Laub M.T."/>
            <person name="Paulsen I.T."/>
            <person name="Nelson K.E."/>
            <person name="Eisen J.A."/>
            <person name="Heidelberg J.F."/>
            <person name="Alley M.R.K."/>
            <person name="Ohta N."/>
            <person name="Maddock J.R."/>
            <person name="Potocka I."/>
            <person name="Nelson W.C."/>
            <person name="Newton A."/>
            <person name="Stephens C."/>
            <person name="Phadke N.D."/>
            <person name="Ely B."/>
            <person name="DeBoy R.T."/>
            <person name="Dodson R.J."/>
            <person name="Durkin A.S."/>
            <person name="Gwinn M.L."/>
            <person name="Haft D.H."/>
            <person name="Kolonay J.F."/>
            <person name="Smit J."/>
            <person name="Craven M.B."/>
            <person name="Khouri H.M."/>
            <person name="Shetty J."/>
            <person name="Berry K.J."/>
            <person name="Utterback T.R."/>
            <person name="Tran K."/>
            <person name="Wolf A.M."/>
            <person name="Vamathevan J.J."/>
            <person name="Ermolaeva M.D."/>
            <person name="White O."/>
            <person name="Salzberg S.L."/>
            <person name="Venter J.C."/>
            <person name="Shapiro L."/>
            <person name="Fraser C.M."/>
        </authorList>
    </citation>
    <scope>NUCLEOTIDE SEQUENCE [LARGE SCALE GENOMIC DNA]</scope>
    <source>
        <strain>ATCC 19089 / CIP 103742 / CB 15</strain>
    </source>
</reference>
<sequence length="777" mass="84381">MTVTIATLGFPRIGPKRELKFALEAYWAGKTDADALLDTARDLRAKTWTRQAALGVAHVPSNDFSLYDHVLDTAVMVGAIPAAYGWSGGTVDLATYFAMARGDQGRPAAEACGPGCGHAPGADGVPALEMTKWFDTNYHYLAPELSPGQAFALTSSKPVDEFLEAKALGVHTRPVLLGPVTFLKLAKTKAEGFSPLSLLSALLPVYGQVLRGLAAAGADWVQIDEPCLALDLTDFERAELRRAYGALTHAAPGVRLMLTSYFGGYGENLATAVNLPVEGLHLDLVRAPDELEAALAASRESLVLSLGVIDGRNVWRADLPALLDRLEPVVARRGSDRVVLAPSCSLLHTPIDLDLETALDPEIRQWLAFAVQKVEALAVLAQALNGGRASVAAALEASAQAARARATSPRIHDPKVAERLAAVTPDMTRRRSPYDQRREAQRARLNLPPLPTTTIGSFPQTTEVRQARAAFAKGQISDATYEAFLRQETARAVAWQETVGLDVLVHGEFERNDMVQYFGEQLAGFAFTQSGWVQSYGSRCVRPPILFGDVSRPAPMTVDWWRYAQGLTRRPMKGMLTGPVTILNWSFVRDDLPRETACRQIALAIRDEVVDLEATGAAIIQIDEAALREGLPLRRGDWDAYLDWAVESFRLAASGVADATQIHTHMCYSEFNDIIAAIGAMDADVISIETARSKMELLDAFVGYAYPAQIGPGVYDIHSPRVPAVEEMTTLLAAARQRLAGEQLWVNPDCGLKTRKWPETQAAIVNMVEAARRARAS</sequence>
<evidence type="ECO:0000255" key="1">
    <source>
        <dbReference type="HAMAP-Rule" id="MF_00172"/>
    </source>
</evidence>
<dbReference type="EC" id="2.1.1.14" evidence="1"/>
<dbReference type="EMBL" id="AE005673">
    <property type="protein sequence ID" value="AAK22469.1"/>
    <property type="molecule type" value="Genomic_DNA"/>
</dbReference>
<dbReference type="PIR" id="A87309">
    <property type="entry name" value="A87309"/>
</dbReference>
<dbReference type="RefSeq" id="NP_419301.1">
    <property type="nucleotide sequence ID" value="NC_002696.2"/>
</dbReference>
<dbReference type="RefSeq" id="WP_010918370.1">
    <property type="nucleotide sequence ID" value="NC_002696.2"/>
</dbReference>
<dbReference type="SMR" id="Q9AAW1"/>
<dbReference type="STRING" id="190650.CC_0482"/>
<dbReference type="EnsemblBacteria" id="AAK22469">
    <property type="protein sequence ID" value="AAK22469"/>
    <property type="gene ID" value="CC_0482"/>
</dbReference>
<dbReference type="KEGG" id="ccr:CC_0482"/>
<dbReference type="PATRIC" id="fig|190650.5.peg.489"/>
<dbReference type="eggNOG" id="COG0620">
    <property type="taxonomic scope" value="Bacteria"/>
</dbReference>
<dbReference type="HOGENOM" id="CLU_013175_0_0_5"/>
<dbReference type="BioCyc" id="CAULO:CC0482-MONOMER"/>
<dbReference type="UniPathway" id="UPA00051">
    <property type="reaction ID" value="UER00082"/>
</dbReference>
<dbReference type="Proteomes" id="UP000001816">
    <property type="component" value="Chromosome"/>
</dbReference>
<dbReference type="GO" id="GO:0003871">
    <property type="term" value="F:5-methyltetrahydropteroyltriglutamate-homocysteine S-methyltransferase activity"/>
    <property type="evidence" value="ECO:0007669"/>
    <property type="project" value="UniProtKB-UniRule"/>
</dbReference>
<dbReference type="GO" id="GO:0008270">
    <property type="term" value="F:zinc ion binding"/>
    <property type="evidence" value="ECO:0007669"/>
    <property type="project" value="InterPro"/>
</dbReference>
<dbReference type="GO" id="GO:0009086">
    <property type="term" value="P:methionine biosynthetic process"/>
    <property type="evidence" value="ECO:0007669"/>
    <property type="project" value="UniProtKB-UniRule"/>
</dbReference>
<dbReference type="GO" id="GO:0032259">
    <property type="term" value="P:methylation"/>
    <property type="evidence" value="ECO:0007669"/>
    <property type="project" value="UniProtKB-KW"/>
</dbReference>
<dbReference type="CDD" id="cd03311">
    <property type="entry name" value="CIMS_C_terminal_like"/>
    <property type="match status" value="1"/>
</dbReference>
<dbReference type="CDD" id="cd03312">
    <property type="entry name" value="CIMS_N_terminal_like"/>
    <property type="match status" value="1"/>
</dbReference>
<dbReference type="FunFam" id="3.20.20.210:FF:000002">
    <property type="entry name" value="5-methyltetrahydropteroyltriglutamate--homocysteine methyltransferase"/>
    <property type="match status" value="1"/>
</dbReference>
<dbReference type="FunFam" id="3.20.20.210:FF:000003">
    <property type="entry name" value="5-methyltetrahydropteroyltriglutamate--homocysteine methyltransferase"/>
    <property type="match status" value="1"/>
</dbReference>
<dbReference type="Gene3D" id="3.20.20.210">
    <property type="match status" value="2"/>
</dbReference>
<dbReference type="HAMAP" id="MF_00172">
    <property type="entry name" value="Meth_synth"/>
    <property type="match status" value="1"/>
</dbReference>
<dbReference type="InterPro" id="IPR013215">
    <property type="entry name" value="Cbl-indep_Met_Synth_N"/>
</dbReference>
<dbReference type="InterPro" id="IPR006276">
    <property type="entry name" value="Cobalamin-indep_Met_synthase"/>
</dbReference>
<dbReference type="InterPro" id="IPR002629">
    <property type="entry name" value="Met_Synth_C/arc"/>
</dbReference>
<dbReference type="InterPro" id="IPR038071">
    <property type="entry name" value="UROD/MetE-like_sf"/>
</dbReference>
<dbReference type="NCBIfam" id="TIGR01371">
    <property type="entry name" value="met_syn_B12ind"/>
    <property type="match status" value="1"/>
</dbReference>
<dbReference type="NCBIfam" id="NF003556">
    <property type="entry name" value="PRK05222.1"/>
    <property type="match status" value="1"/>
</dbReference>
<dbReference type="PANTHER" id="PTHR30519">
    <property type="entry name" value="5-METHYLTETRAHYDROPTEROYLTRIGLUTAMATE--HOMOCYSTEINE METHYLTRANSFERASE"/>
    <property type="match status" value="1"/>
</dbReference>
<dbReference type="Pfam" id="PF08267">
    <property type="entry name" value="Meth_synt_1"/>
    <property type="match status" value="1"/>
</dbReference>
<dbReference type="Pfam" id="PF01717">
    <property type="entry name" value="Meth_synt_2"/>
    <property type="match status" value="1"/>
</dbReference>
<dbReference type="PIRSF" id="PIRSF000382">
    <property type="entry name" value="MeTrfase_B12_ind"/>
    <property type="match status" value="1"/>
</dbReference>
<dbReference type="SUPFAM" id="SSF51726">
    <property type="entry name" value="UROD/MetE-like"/>
    <property type="match status" value="2"/>
</dbReference>
<accession>Q9AAW1</accession>
<organism>
    <name type="scientific">Caulobacter vibrioides (strain ATCC 19089 / CIP 103742 / CB 15)</name>
    <name type="common">Caulobacter crescentus</name>
    <dbReference type="NCBI Taxonomy" id="190650"/>
    <lineage>
        <taxon>Bacteria</taxon>
        <taxon>Pseudomonadati</taxon>
        <taxon>Pseudomonadota</taxon>
        <taxon>Alphaproteobacteria</taxon>
        <taxon>Caulobacterales</taxon>
        <taxon>Caulobacteraceae</taxon>
        <taxon>Caulobacter</taxon>
    </lineage>
</organism>
<gene>
    <name evidence="1" type="primary">metE</name>
    <name type="ordered locus">CC_0482</name>
</gene>